<gene>
    <name type="primary">ZCCHC24</name>
    <name type="ORF">QmoA-10757</name>
</gene>
<sequence>MSLLSAIDTSAASVYQPAQLLNWVYLSLQDTHQASAFDAFRPEPTAGAAPPELAFGKGRPEQLGSPLHSSYLNSFFQLQRGEALSNSVYKGASPYGSLNNIADGLSSLTEHFSDLTLTSEARKPSKRPPPNYLCHLCFNKGHYIKDCPQARPKGEGLTPYQGKKRCFGEYKCPKCKRKWMSGNSWANMGQECIKCHINVYPHKQRPLEKPDGLDVSDQSKEHPQHLCEECKVLGYYCRRVQ</sequence>
<organism>
    <name type="scientific">Macaca fascicularis</name>
    <name type="common">Crab-eating macaque</name>
    <name type="synonym">Cynomolgus monkey</name>
    <dbReference type="NCBI Taxonomy" id="9541"/>
    <lineage>
        <taxon>Eukaryota</taxon>
        <taxon>Metazoa</taxon>
        <taxon>Chordata</taxon>
        <taxon>Craniata</taxon>
        <taxon>Vertebrata</taxon>
        <taxon>Euteleostomi</taxon>
        <taxon>Mammalia</taxon>
        <taxon>Eutheria</taxon>
        <taxon>Euarchontoglires</taxon>
        <taxon>Primates</taxon>
        <taxon>Haplorrhini</taxon>
        <taxon>Catarrhini</taxon>
        <taxon>Cercopithecidae</taxon>
        <taxon>Cercopithecinae</taxon>
        <taxon>Macaca</taxon>
    </lineage>
</organism>
<reference key="1">
    <citation type="submission" date="2002-12" db="EMBL/GenBank/DDBJ databases">
        <title>Isolation of full-length cDNA clones from macaque brain cDNA libraries.</title>
        <authorList>
            <person name="Osada N."/>
            <person name="Hida M."/>
            <person name="Kusuda J."/>
            <person name="Tanuma R."/>
            <person name="Iseki K."/>
            <person name="Hirata M."/>
            <person name="Suto Y."/>
            <person name="Hirai M."/>
            <person name="Terao K."/>
            <person name="Suzuki Y."/>
            <person name="Sugano S."/>
            <person name="Hashimoto K."/>
        </authorList>
    </citation>
    <scope>NUCLEOTIDE SEQUENCE [LARGE SCALE MRNA]</scope>
    <source>
        <tissue>Medulla oblongata</tissue>
    </source>
</reference>
<protein>
    <recommendedName>
        <fullName>Zinc finger CCHC domain-containing protein 24</fullName>
    </recommendedName>
</protein>
<evidence type="ECO:0000250" key="1">
    <source>
        <dbReference type="UniProtKB" id="Q8N2G6"/>
    </source>
</evidence>
<evidence type="ECO:0000255" key="2">
    <source>
        <dbReference type="PROSITE-ProRule" id="PRU00047"/>
    </source>
</evidence>
<accession>Q8HXK7</accession>
<name>ZCH24_MACFA</name>
<dbReference type="EMBL" id="AB097510">
    <property type="protein sequence ID" value="BAC41735.1"/>
    <property type="molecule type" value="mRNA"/>
</dbReference>
<dbReference type="STRING" id="9541.ENSMFAP00000033120"/>
<dbReference type="eggNOG" id="ENOG502QRVW">
    <property type="taxonomic scope" value="Eukaryota"/>
</dbReference>
<dbReference type="OrthoDB" id="10038672at2759"/>
<dbReference type="Proteomes" id="UP000233100">
    <property type="component" value="Unplaced"/>
</dbReference>
<dbReference type="GO" id="GO:0003676">
    <property type="term" value="F:nucleic acid binding"/>
    <property type="evidence" value="ECO:0007669"/>
    <property type="project" value="InterPro"/>
</dbReference>
<dbReference type="GO" id="GO:0008270">
    <property type="term" value="F:zinc ion binding"/>
    <property type="evidence" value="ECO:0007669"/>
    <property type="project" value="UniProtKB-KW"/>
</dbReference>
<dbReference type="InterPro" id="IPR027377">
    <property type="entry name" value="ZAR1/RTP1-5-like_Znf-3CxxC"/>
</dbReference>
<dbReference type="InterPro" id="IPR033446">
    <property type="entry name" value="Zcchc24_Znf-3CxxC"/>
</dbReference>
<dbReference type="InterPro" id="IPR025829">
    <property type="entry name" value="Zn_knuckle_CX2CX3GHX4C"/>
</dbReference>
<dbReference type="InterPro" id="IPR001878">
    <property type="entry name" value="Znf_CCHC"/>
</dbReference>
<dbReference type="InterPro" id="IPR036875">
    <property type="entry name" value="Znf_CCHC_sf"/>
</dbReference>
<dbReference type="Pfam" id="PF23490">
    <property type="entry name" value="ZCCHC24_C"/>
    <property type="match status" value="1"/>
</dbReference>
<dbReference type="Pfam" id="PF13696">
    <property type="entry name" value="zf-CCHC_2"/>
    <property type="match status" value="1"/>
</dbReference>
<dbReference type="Pfam" id="PF17180">
    <property type="entry name" value="Zn_ribbon_3CxxC_2"/>
    <property type="match status" value="1"/>
</dbReference>
<dbReference type="SMART" id="SM01328">
    <property type="entry name" value="zf-3CxxC"/>
    <property type="match status" value="1"/>
</dbReference>
<dbReference type="SUPFAM" id="SSF57756">
    <property type="entry name" value="Retrovirus zinc finger-like domains"/>
    <property type="match status" value="1"/>
</dbReference>
<dbReference type="PROSITE" id="PS50158">
    <property type="entry name" value="ZF_CCHC"/>
    <property type="match status" value="1"/>
</dbReference>
<feature type="chain" id="PRO_0000274290" description="Zinc finger CCHC domain-containing protein 24">
    <location>
        <begin position="1"/>
        <end position="241"/>
    </location>
</feature>
<feature type="zinc finger region" description="CCHC-type" evidence="2">
    <location>
        <begin position="132"/>
        <end position="149"/>
    </location>
</feature>
<feature type="modified residue" description="Phosphoserine" evidence="1">
    <location>
        <position position="65"/>
    </location>
</feature>
<feature type="modified residue" description="Phosphoserine" evidence="1">
    <location>
        <position position="93"/>
    </location>
</feature>
<proteinExistence type="evidence at transcript level"/>
<keyword id="KW-0479">Metal-binding</keyword>
<keyword id="KW-0597">Phosphoprotein</keyword>
<keyword id="KW-1185">Reference proteome</keyword>
<keyword id="KW-0862">Zinc</keyword>
<keyword id="KW-0863">Zinc-finger</keyword>